<name>RL15_ANADE</name>
<protein>
    <recommendedName>
        <fullName evidence="1">Large ribosomal subunit protein uL15</fullName>
    </recommendedName>
    <alternativeName>
        <fullName evidence="3">50S ribosomal protein L15</fullName>
    </alternativeName>
</protein>
<accession>Q2IJ68</accession>
<reference key="1">
    <citation type="submission" date="2006-01" db="EMBL/GenBank/DDBJ databases">
        <title>Complete sequence of Anaeromyxobacter dehalogenans 2CP-C.</title>
        <authorList>
            <person name="Copeland A."/>
            <person name="Lucas S."/>
            <person name="Lapidus A."/>
            <person name="Barry K."/>
            <person name="Detter J.C."/>
            <person name="Glavina T."/>
            <person name="Hammon N."/>
            <person name="Israni S."/>
            <person name="Pitluck S."/>
            <person name="Brettin T."/>
            <person name="Bruce D."/>
            <person name="Han C."/>
            <person name="Tapia R."/>
            <person name="Gilna P."/>
            <person name="Kiss H."/>
            <person name="Schmutz J."/>
            <person name="Larimer F."/>
            <person name="Land M."/>
            <person name="Kyrpides N."/>
            <person name="Anderson I."/>
            <person name="Sanford R.A."/>
            <person name="Ritalahti K.M."/>
            <person name="Thomas H.S."/>
            <person name="Kirby J.R."/>
            <person name="Zhulin I.B."/>
            <person name="Loeffler F.E."/>
            <person name="Richardson P."/>
        </authorList>
    </citation>
    <scope>NUCLEOTIDE SEQUENCE [LARGE SCALE GENOMIC DNA]</scope>
    <source>
        <strain>2CP-C</strain>
    </source>
</reference>
<proteinExistence type="inferred from homology"/>
<keyword id="KW-1185">Reference proteome</keyword>
<keyword id="KW-0687">Ribonucleoprotein</keyword>
<keyword id="KW-0689">Ribosomal protein</keyword>
<keyword id="KW-0694">RNA-binding</keyword>
<keyword id="KW-0699">rRNA-binding</keyword>
<organism>
    <name type="scientific">Anaeromyxobacter dehalogenans (strain 2CP-C)</name>
    <dbReference type="NCBI Taxonomy" id="290397"/>
    <lineage>
        <taxon>Bacteria</taxon>
        <taxon>Pseudomonadati</taxon>
        <taxon>Myxococcota</taxon>
        <taxon>Myxococcia</taxon>
        <taxon>Myxococcales</taxon>
        <taxon>Cystobacterineae</taxon>
        <taxon>Anaeromyxobacteraceae</taxon>
        <taxon>Anaeromyxobacter</taxon>
    </lineage>
</organism>
<sequence length="165" mass="17222">MSLNQLKAPRGANRAKKRVGRGQGSGLGKTAGRGGKGQKARSGNMHFEGFEGGQMPLQRRLPKFGFHNIFRRELEEVKVGDLQGLSGVVDPAALKSAGLVRGNRDGVVVLAGGELSSALTVKVHRVTAGARAAIEKAGGKVELIPAPQTMHQKAKAAKKAAAQAK</sequence>
<comment type="function">
    <text evidence="1">Binds to the 23S rRNA.</text>
</comment>
<comment type="subunit">
    <text evidence="1">Part of the 50S ribosomal subunit.</text>
</comment>
<comment type="similarity">
    <text evidence="1">Belongs to the universal ribosomal protein uL15 family.</text>
</comment>
<feature type="chain" id="PRO_0000251486" description="Large ribosomal subunit protein uL15">
    <location>
        <begin position="1"/>
        <end position="165"/>
    </location>
</feature>
<feature type="region of interest" description="Disordered" evidence="2">
    <location>
        <begin position="1"/>
        <end position="44"/>
    </location>
</feature>
<feature type="compositionally biased region" description="Gly residues" evidence="2">
    <location>
        <begin position="21"/>
        <end position="37"/>
    </location>
</feature>
<evidence type="ECO:0000255" key="1">
    <source>
        <dbReference type="HAMAP-Rule" id="MF_01341"/>
    </source>
</evidence>
<evidence type="ECO:0000256" key="2">
    <source>
        <dbReference type="SAM" id="MobiDB-lite"/>
    </source>
</evidence>
<evidence type="ECO:0000305" key="3"/>
<gene>
    <name evidence="1" type="primary">rplO</name>
    <name type="ordered locus">Adeh_1927</name>
</gene>
<dbReference type="EMBL" id="CP000251">
    <property type="protein sequence ID" value="ABC81698.1"/>
    <property type="molecule type" value="Genomic_DNA"/>
</dbReference>
<dbReference type="RefSeq" id="WP_011420981.1">
    <property type="nucleotide sequence ID" value="NC_007760.1"/>
</dbReference>
<dbReference type="SMR" id="Q2IJ68"/>
<dbReference type="STRING" id="290397.Adeh_1927"/>
<dbReference type="KEGG" id="ade:Adeh_1927"/>
<dbReference type="eggNOG" id="COG0200">
    <property type="taxonomic scope" value="Bacteria"/>
</dbReference>
<dbReference type="HOGENOM" id="CLU_055188_4_2_7"/>
<dbReference type="OrthoDB" id="9810293at2"/>
<dbReference type="Proteomes" id="UP000001935">
    <property type="component" value="Chromosome"/>
</dbReference>
<dbReference type="GO" id="GO:0022625">
    <property type="term" value="C:cytosolic large ribosomal subunit"/>
    <property type="evidence" value="ECO:0007669"/>
    <property type="project" value="TreeGrafter"/>
</dbReference>
<dbReference type="GO" id="GO:0019843">
    <property type="term" value="F:rRNA binding"/>
    <property type="evidence" value="ECO:0007669"/>
    <property type="project" value="UniProtKB-UniRule"/>
</dbReference>
<dbReference type="GO" id="GO:0003735">
    <property type="term" value="F:structural constituent of ribosome"/>
    <property type="evidence" value="ECO:0007669"/>
    <property type="project" value="InterPro"/>
</dbReference>
<dbReference type="GO" id="GO:0006412">
    <property type="term" value="P:translation"/>
    <property type="evidence" value="ECO:0007669"/>
    <property type="project" value="UniProtKB-UniRule"/>
</dbReference>
<dbReference type="Gene3D" id="3.100.10.10">
    <property type="match status" value="1"/>
</dbReference>
<dbReference type="HAMAP" id="MF_01341">
    <property type="entry name" value="Ribosomal_uL15"/>
    <property type="match status" value="1"/>
</dbReference>
<dbReference type="InterPro" id="IPR030878">
    <property type="entry name" value="Ribosomal_uL15"/>
</dbReference>
<dbReference type="InterPro" id="IPR021131">
    <property type="entry name" value="Ribosomal_uL15/eL18"/>
</dbReference>
<dbReference type="InterPro" id="IPR036227">
    <property type="entry name" value="Ribosomal_uL15/eL18_sf"/>
</dbReference>
<dbReference type="InterPro" id="IPR005749">
    <property type="entry name" value="Ribosomal_uL15_bac-type"/>
</dbReference>
<dbReference type="NCBIfam" id="TIGR01071">
    <property type="entry name" value="rplO_bact"/>
    <property type="match status" value="1"/>
</dbReference>
<dbReference type="PANTHER" id="PTHR12934">
    <property type="entry name" value="50S RIBOSOMAL PROTEIN L15"/>
    <property type="match status" value="1"/>
</dbReference>
<dbReference type="PANTHER" id="PTHR12934:SF11">
    <property type="entry name" value="LARGE RIBOSOMAL SUBUNIT PROTEIN UL15M"/>
    <property type="match status" value="1"/>
</dbReference>
<dbReference type="Pfam" id="PF00828">
    <property type="entry name" value="Ribosomal_L27A"/>
    <property type="match status" value="1"/>
</dbReference>
<dbReference type="SUPFAM" id="SSF52080">
    <property type="entry name" value="Ribosomal proteins L15p and L18e"/>
    <property type="match status" value="1"/>
</dbReference>